<evidence type="ECO:0000250" key="1"/>
<evidence type="ECO:0000250" key="2">
    <source>
        <dbReference type="UniProtKB" id="P0A9P4"/>
    </source>
</evidence>
<evidence type="ECO:0000305" key="3"/>
<sequence length="311" mass="33433">MIDCAIIGGGPAGLSAGLYATRGGVKNAVLFEKGMPGGQITGSSEIENYPGVKEVVSGLDFMQPWQEQCFRFGLKHEMTAIQRVSKKGSHFVILAEDGKTFEAKSVIIATGGSPKRTGIKGESEYWGKGVSTCATCDGFFYKNKEVAVLGGGDTAVEEAIYLANICKKVYLIHRRDGFRCAPITLEHAKNNSKIEFLTPYVVEEIKGDASGVSSLSIKNTATNEKRELVVPGLFIFVGYDVNNAVLKQEDNSMLCECDEYGSIVVDFSMKTNVQGLFAAGDIRIFAPKQVVCAASDGATAALSVISYLEHH</sequence>
<dbReference type="EC" id="1.8.1.9"/>
<dbReference type="EMBL" id="AE001439">
    <property type="protein sequence ID" value="AAD06343.1"/>
    <property type="molecule type" value="Genomic_DNA"/>
</dbReference>
<dbReference type="PIR" id="D71890">
    <property type="entry name" value="D71890"/>
</dbReference>
<dbReference type="RefSeq" id="WP_000564402.1">
    <property type="nucleotide sequence ID" value="NC_000921.1"/>
</dbReference>
<dbReference type="SMR" id="Q9ZL18"/>
<dbReference type="KEGG" id="hpj:jhp_0764"/>
<dbReference type="PATRIC" id="fig|85963.30.peg.212"/>
<dbReference type="eggNOG" id="COG0492">
    <property type="taxonomic scope" value="Bacteria"/>
</dbReference>
<dbReference type="Proteomes" id="UP000000804">
    <property type="component" value="Chromosome"/>
</dbReference>
<dbReference type="GO" id="GO:0005737">
    <property type="term" value="C:cytoplasm"/>
    <property type="evidence" value="ECO:0007669"/>
    <property type="project" value="UniProtKB-SubCell"/>
</dbReference>
<dbReference type="GO" id="GO:0004791">
    <property type="term" value="F:thioredoxin-disulfide reductase (NADPH) activity"/>
    <property type="evidence" value="ECO:0007669"/>
    <property type="project" value="UniProtKB-EC"/>
</dbReference>
<dbReference type="GO" id="GO:0019430">
    <property type="term" value="P:removal of superoxide radicals"/>
    <property type="evidence" value="ECO:0007669"/>
    <property type="project" value="InterPro"/>
</dbReference>
<dbReference type="Gene3D" id="3.50.50.60">
    <property type="entry name" value="FAD/NAD(P)-binding domain"/>
    <property type="match status" value="2"/>
</dbReference>
<dbReference type="InterPro" id="IPR036188">
    <property type="entry name" value="FAD/NAD-bd_sf"/>
</dbReference>
<dbReference type="InterPro" id="IPR023753">
    <property type="entry name" value="FAD/NAD-binding_dom"/>
</dbReference>
<dbReference type="InterPro" id="IPR050097">
    <property type="entry name" value="Ferredoxin-NADP_redctase_2"/>
</dbReference>
<dbReference type="InterPro" id="IPR008255">
    <property type="entry name" value="Pyr_nucl-diS_OxRdtase_2_AS"/>
</dbReference>
<dbReference type="InterPro" id="IPR005982">
    <property type="entry name" value="Thioredox_Rdtase"/>
</dbReference>
<dbReference type="NCBIfam" id="TIGR01292">
    <property type="entry name" value="TRX_reduct"/>
    <property type="match status" value="1"/>
</dbReference>
<dbReference type="PANTHER" id="PTHR48105">
    <property type="entry name" value="THIOREDOXIN REDUCTASE 1-RELATED-RELATED"/>
    <property type="match status" value="1"/>
</dbReference>
<dbReference type="Pfam" id="PF07992">
    <property type="entry name" value="Pyr_redox_2"/>
    <property type="match status" value="1"/>
</dbReference>
<dbReference type="PRINTS" id="PR00368">
    <property type="entry name" value="FADPNR"/>
</dbReference>
<dbReference type="PRINTS" id="PR00469">
    <property type="entry name" value="PNDRDTASEII"/>
</dbReference>
<dbReference type="SUPFAM" id="SSF51905">
    <property type="entry name" value="FAD/NAD(P)-binding domain"/>
    <property type="match status" value="1"/>
</dbReference>
<dbReference type="PROSITE" id="PS00573">
    <property type="entry name" value="PYRIDINE_REDOX_2"/>
    <property type="match status" value="1"/>
</dbReference>
<protein>
    <recommendedName>
        <fullName>Thioredoxin reductase</fullName>
        <shortName>TRXR</shortName>
        <ecNumber>1.8.1.9</ecNumber>
    </recommendedName>
</protein>
<feature type="chain" id="PRO_0000166734" description="Thioredoxin reductase">
    <location>
        <begin position="1"/>
        <end position="311"/>
    </location>
</feature>
<feature type="binding site" evidence="1">
    <location>
        <begin position="31"/>
        <end position="39"/>
    </location>
    <ligand>
        <name>FAD</name>
        <dbReference type="ChEBI" id="CHEBI:57692"/>
    </ligand>
</feature>
<feature type="binding site" evidence="2">
    <location>
        <begin position="32"/>
        <end position="39"/>
    </location>
    <ligand>
        <name>FAD</name>
        <dbReference type="ChEBI" id="CHEBI:57692"/>
    </ligand>
</feature>
<feature type="binding site" evidence="2">
    <location>
        <begin position="281"/>
        <end position="290"/>
    </location>
    <ligand>
        <name>FAD</name>
        <dbReference type="ChEBI" id="CHEBI:57692"/>
    </ligand>
</feature>
<feature type="disulfide bond" description="Redox-active" evidence="2">
    <location>
        <begin position="133"/>
        <end position="136"/>
    </location>
</feature>
<gene>
    <name type="primary">trxB</name>
    <name type="ordered locus">jhp_0764</name>
</gene>
<comment type="catalytic activity">
    <reaction>
        <text>[thioredoxin]-dithiol + NADP(+) = [thioredoxin]-disulfide + NADPH + H(+)</text>
        <dbReference type="Rhea" id="RHEA:20345"/>
        <dbReference type="Rhea" id="RHEA-COMP:10698"/>
        <dbReference type="Rhea" id="RHEA-COMP:10700"/>
        <dbReference type="ChEBI" id="CHEBI:15378"/>
        <dbReference type="ChEBI" id="CHEBI:29950"/>
        <dbReference type="ChEBI" id="CHEBI:50058"/>
        <dbReference type="ChEBI" id="CHEBI:57783"/>
        <dbReference type="ChEBI" id="CHEBI:58349"/>
        <dbReference type="EC" id="1.8.1.9"/>
    </reaction>
</comment>
<comment type="cofactor">
    <cofactor evidence="2">
        <name>FAD</name>
        <dbReference type="ChEBI" id="CHEBI:57692"/>
    </cofactor>
    <text evidence="2">Binds 1 FAD per subunit.</text>
</comment>
<comment type="subunit">
    <text evidence="2">Homodimer.</text>
</comment>
<comment type="subcellular location">
    <subcellularLocation>
        <location evidence="1">Cytoplasm</location>
    </subcellularLocation>
</comment>
<comment type="miscellaneous">
    <text>The active site is a redox-active disulfide bond.</text>
</comment>
<comment type="similarity">
    <text evidence="3">Belongs to the class-II pyridine nucleotide-disulfide oxidoreductase family.</text>
</comment>
<proteinExistence type="inferred from homology"/>
<accession>Q9ZL18</accession>
<organism>
    <name type="scientific">Helicobacter pylori (strain J99 / ATCC 700824)</name>
    <name type="common">Campylobacter pylori J99</name>
    <dbReference type="NCBI Taxonomy" id="85963"/>
    <lineage>
        <taxon>Bacteria</taxon>
        <taxon>Pseudomonadati</taxon>
        <taxon>Campylobacterota</taxon>
        <taxon>Epsilonproteobacteria</taxon>
        <taxon>Campylobacterales</taxon>
        <taxon>Helicobacteraceae</taxon>
        <taxon>Helicobacter</taxon>
    </lineage>
</organism>
<name>TRXB_HELPJ</name>
<keyword id="KW-0963">Cytoplasm</keyword>
<keyword id="KW-1015">Disulfide bond</keyword>
<keyword id="KW-0274">FAD</keyword>
<keyword id="KW-0285">Flavoprotein</keyword>
<keyword id="KW-0521">NADP</keyword>
<keyword id="KW-0560">Oxidoreductase</keyword>
<keyword id="KW-0676">Redox-active center</keyword>
<reference key="1">
    <citation type="journal article" date="1999" name="Nature">
        <title>Genomic sequence comparison of two unrelated isolates of the human gastric pathogen Helicobacter pylori.</title>
        <authorList>
            <person name="Alm R.A."/>
            <person name="Ling L.-S.L."/>
            <person name="Moir D.T."/>
            <person name="King B.L."/>
            <person name="Brown E.D."/>
            <person name="Doig P.C."/>
            <person name="Smith D.R."/>
            <person name="Noonan B."/>
            <person name="Guild B.C."/>
            <person name="deJonge B.L."/>
            <person name="Carmel G."/>
            <person name="Tummino P.J."/>
            <person name="Caruso A."/>
            <person name="Uria-Nickelsen M."/>
            <person name="Mills D.M."/>
            <person name="Ives C."/>
            <person name="Gibson R."/>
            <person name="Merberg D."/>
            <person name="Mills S.D."/>
            <person name="Jiang Q."/>
            <person name="Taylor D.E."/>
            <person name="Vovis G.F."/>
            <person name="Trust T.J."/>
        </authorList>
    </citation>
    <scope>NUCLEOTIDE SEQUENCE [LARGE SCALE GENOMIC DNA]</scope>
    <source>
        <strain>J99 / ATCC 700824</strain>
    </source>
</reference>